<proteinExistence type="inferred from homology"/>
<gene>
    <name type="primary">pwwp2a</name>
</gene>
<evidence type="ECO:0000250" key="1">
    <source>
        <dbReference type="UniProtKB" id="Q96N64"/>
    </source>
</evidence>
<evidence type="ECO:0000255" key="2">
    <source>
        <dbReference type="PROSITE-ProRule" id="PRU00162"/>
    </source>
</evidence>
<evidence type="ECO:0000256" key="3">
    <source>
        <dbReference type="SAM" id="MobiDB-lite"/>
    </source>
</evidence>
<evidence type="ECO:0000269" key="4">
    <source>
    </source>
</evidence>
<evidence type="ECO:0000305" key="5"/>
<keyword id="KW-0539">Nucleus</keyword>
<keyword id="KW-1185">Reference proteome</keyword>
<keyword id="KW-0804">Transcription</keyword>
<keyword id="KW-0805">Transcription regulation</keyword>
<accession>A0A1L8GR68</accession>
<sequence length="784" mass="87011">MAAVAAAPGPGEAGESEQDSKTTPGEWRLGELQCEPIVAVLDSERQSLIRCEMDSDTLEKAGPVVEQLGGSGTDQVYGIDKNSDFESVSVMDYKPPYRGINQERIAGENKKARHEQLPRHTFLQKEPTPMILSEVRDSGVHTEMCLEEATLSSNNDGSETSLNDPDCDIGSMGTSEGSVVTSGIGSLIPGSEVQVTLDHIIQDALVVSFCHGNRIFSGVLMDLSKRFGPHGIPVTVHPRREYKNKPVESIQEESKSFHEETLLKSEENVTPPEDVTPIQQSESCEIQNLWTTKPPPLFHEGAPYPPPLFIRDTYNQSIPQPPPRKIKRPKKKIYREEPTSIINAIKLRPRQVLCDKCKNNVVADKKEIRKVATDSYKTEEGKRRRHETITTVNKKLKTDHKVNGKGQHESQKRAGVTKVPNLAHGRGKVVKVPSQTSAAKTQLHTKKVLQNKNMDHVKAREVLKMAKEKAQKKQKVTTSSKNAHSKVHFTRRLQNSNSGTLPPRLRIKPQRYRNEENDSSLKPGLETLRSSKMGIKPQTRYSATRSAGEAPSEIQSPSNGPEEVSSEIQDTNVCVPPEEQDLQQTLGKRGSKSNITVYMAINQKKANSSSASVCSSDSTDDMKSSHSECSSTENFDFPPGSMHTPSSSSASSKEEKKLSNSLKIKMFSKNVSKCVTPDGRTICVGDIVWAKIYGFPWWPARILAITISRKDNGLLIRQEARISWFGSPTTSFLALSQLAPFLENFQSRFNKKRKGLYRKAITEAAKAAKQLTPEVRALLTQFET</sequence>
<organism>
    <name type="scientific">Xenopus laevis</name>
    <name type="common">African clawed frog</name>
    <dbReference type="NCBI Taxonomy" id="8355"/>
    <lineage>
        <taxon>Eukaryota</taxon>
        <taxon>Metazoa</taxon>
        <taxon>Chordata</taxon>
        <taxon>Craniata</taxon>
        <taxon>Vertebrata</taxon>
        <taxon>Euteleostomi</taxon>
        <taxon>Amphibia</taxon>
        <taxon>Batrachia</taxon>
        <taxon>Anura</taxon>
        <taxon>Pipoidea</taxon>
        <taxon>Pipidae</taxon>
        <taxon>Xenopodinae</taxon>
        <taxon>Xenopus</taxon>
        <taxon>Xenopus</taxon>
    </lineage>
</organism>
<feature type="chain" id="PRO_0000441729" description="PWWP domain-containing protein 2A">
    <location>
        <begin position="1"/>
        <end position="784"/>
    </location>
</feature>
<feature type="domain" description="PWWP" evidence="2">
    <location>
        <begin position="684"/>
        <end position="744"/>
    </location>
</feature>
<feature type="region of interest" description="Disordered" evidence="3">
    <location>
        <begin position="1"/>
        <end position="29"/>
    </location>
</feature>
<feature type="region of interest" description="Disordered" evidence="3">
    <location>
        <begin position="399"/>
        <end position="443"/>
    </location>
</feature>
<feature type="region of interest" description="Disordered" evidence="3">
    <location>
        <begin position="468"/>
        <end position="570"/>
    </location>
</feature>
<feature type="region of interest" description="Disordered" evidence="3">
    <location>
        <begin position="609"/>
        <end position="655"/>
    </location>
</feature>
<feature type="compositionally biased region" description="Low complexity" evidence="3">
    <location>
        <begin position="1"/>
        <end position="10"/>
    </location>
</feature>
<feature type="compositionally biased region" description="Basic and acidic residues" evidence="3">
    <location>
        <begin position="399"/>
        <end position="412"/>
    </location>
</feature>
<feature type="compositionally biased region" description="Polar residues" evidence="3">
    <location>
        <begin position="433"/>
        <end position="442"/>
    </location>
</feature>
<dbReference type="EMBL" id="CM004471">
    <property type="protein sequence ID" value="OCT86276.1"/>
    <property type="status" value="ALT_SEQ"/>
    <property type="molecule type" value="Genomic_DNA"/>
</dbReference>
<dbReference type="SMR" id="A0A1L8GR68"/>
<dbReference type="STRING" id="8355.A0A1L8GR68"/>
<dbReference type="PaxDb" id="8355-A0A1L8GR68"/>
<dbReference type="AGR" id="Xenbase:XB-GENE-6488357"/>
<dbReference type="Xenbase" id="XB-GENE-6488357">
    <property type="gene designation" value="pwwp2a.S"/>
</dbReference>
<dbReference type="Proteomes" id="UP000186698">
    <property type="component" value="Unplaced"/>
</dbReference>
<dbReference type="Proteomes" id="UP000694892">
    <property type="component" value="Chromosome 3S"/>
</dbReference>
<dbReference type="GO" id="GO:0010369">
    <property type="term" value="C:chromocenter"/>
    <property type="evidence" value="ECO:0007669"/>
    <property type="project" value="TreeGrafter"/>
</dbReference>
<dbReference type="GO" id="GO:0005634">
    <property type="term" value="C:nucleus"/>
    <property type="evidence" value="ECO:0000250"/>
    <property type="project" value="UniProtKB"/>
</dbReference>
<dbReference type="GO" id="GO:0003682">
    <property type="term" value="F:chromatin binding"/>
    <property type="evidence" value="ECO:0000250"/>
    <property type="project" value="UniProtKB"/>
</dbReference>
<dbReference type="GO" id="GO:0140003">
    <property type="term" value="F:histone H3K36me3 reader activity"/>
    <property type="evidence" value="ECO:0000250"/>
    <property type="project" value="UniProtKB"/>
</dbReference>
<dbReference type="GO" id="GO:0006338">
    <property type="term" value="P:chromatin remodeling"/>
    <property type="evidence" value="ECO:0000250"/>
    <property type="project" value="UniProtKB"/>
</dbReference>
<dbReference type="GO" id="GO:0001654">
    <property type="term" value="P:eye development"/>
    <property type="evidence" value="ECO:0000315"/>
    <property type="project" value="UniProtKB"/>
</dbReference>
<dbReference type="GO" id="GO:0060322">
    <property type="term" value="P:head development"/>
    <property type="evidence" value="ECO:0000315"/>
    <property type="project" value="UniProtKB"/>
</dbReference>
<dbReference type="GO" id="GO:0014033">
    <property type="term" value="P:neural crest cell differentiation"/>
    <property type="evidence" value="ECO:0000315"/>
    <property type="project" value="UniProtKB"/>
</dbReference>
<dbReference type="GO" id="GO:0001755">
    <property type="term" value="P:neural crest cell migration"/>
    <property type="evidence" value="ECO:0000315"/>
    <property type="project" value="UniProtKB"/>
</dbReference>
<dbReference type="CDD" id="cd20152">
    <property type="entry name" value="PWWP_PWWP2A"/>
    <property type="match status" value="1"/>
</dbReference>
<dbReference type="FunFam" id="2.30.30.140:FF:000036">
    <property type="entry name" value="PWWP domain-containing protein 2A"/>
    <property type="match status" value="1"/>
</dbReference>
<dbReference type="Gene3D" id="2.30.30.140">
    <property type="match status" value="1"/>
</dbReference>
<dbReference type="InterPro" id="IPR000313">
    <property type="entry name" value="PWWP_dom"/>
</dbReference>
<dbReference type="PANTHER" id="PTHR16112">
    <property type="entry name" value="METHYL-CPG BINDING PROTEIN, DROSOPHILA"/>
    <property type="match status" value="1"/>
</dbReference>
<dbReference type="PANTHER" id="PTHR16112:SF22">
    <property type="entry name" value="PWWP DOMAIN-CONTAINING 2B"/>
    <property type="match status" value="1"/>
</dbReference>
<dbReference type="Pfam" id="PF00855">
    <property type="entry name" value="PWWP"/>
    <property type="match status" value="1"/>
</dbReference>
<dbReference type="SMART" id="SM00293">
    <property type="entry name" value="PWWP"/>
    <property type="match status" value="1"/>
</dbReference>
<dbReference type="SUPFAM" id="SSF63748">
    <property type="entry name" value="Tudor/PWWP/MBT"/>
    <property type="match status" value="1"/>
</dbReference>
<dbReference type="PROSITE" id="PS50812">
    <property type="entry name" value="PWWP"/>
    <property type="match status" value="1"/>
</dbReference>
<protein>
    <recommendedName>
        <fullName>PWWP domain-containing protein 2A</fullName>
    </recommendedName>
</protein>
<name>PWP2A_XENLA</name>
<comment type="function">
    <text evidence="1 4">H2A.Z-specific chromatin binding protein which plays an important role in the neural crest cell differentiation and/or migration during early development and is essential for the development of the head and eye (PubMed:28645917). Acts as an adapter between distinct nucleosome components (H3K36me3 or H2A.Z) and chromatin-modifying complexes, contributing to the regulation of the levels of histone acetylation at actively transcribed genes (By similarity).</text>
</comment>
<comment type="subcellular location">
    <subcellularLocation>
        <location evidence="1">Nucleus</location>
    </subcellularLocation>
</comment>
<comment type="disruption phenotype">
    <text evidence="4">Embryos exhibit lack of retinal tissue combined with a reduced head size. Defects in neural crest stem cell migration and differentiation seen.</text>
</comment>
<comment type="sequence caution" evidence="5">
    <conflict type="erroneous gene model prediction">
        <sequence resource="EMBL-CDS" id="OCT86276"/>
    </conflict>
</comment>
<reference key="1">
    <citation type="journal article" date="2016" name="Nature">
        <title>Genome evolution in the allotetraploid frog Xenopus laevis.</title>
        <authorList>
            <person name="Session A.M."/>
            <person name="Uno Y."/>
            <person name="Kwon T."/>
            <person name="Chapman J.A."/>
            <person name="Toyoda A."/>
            <person name="Takahashi S."/>
            <person name="Fukui A."/>
            <person name="Hikosaka A."/>
            <person name="Suzuki A."/>
            <person name="Kondo M."/>
            <person name="van Heeringen S.J."/>
            <person name="Quigley I."/>
            <person name="Heinz S."/>
            <person name="Ogino H."/>
            <person name="Ochi H."/>
            <person name="Hellsten U."/>
            <person name="Lyons J.B."/>
            <person name="Simakov O."/>
            <person name="Putnam N."/>
            <person name="Stites J."/>
            <person name="Kuroki Y."/>
            <person name="Tanaka T."/>
            <person name="Michiue T."/>
            <person name="Watanabe M."/>
            <person name="Bogdanovic O."/>
            <person name="Lister R."/>
            <person name="Georgiou G."/>
            <person name="Paranjpe S.S."/>
            <person name="van Kruijsbergen I."/>
            <person name="Shu S."/>
            <person name="Carlson J."/>
            <person name="Kinoshita T."/>
            <person name="Ohta Y."/>
            <person name="Mawaribuchi S."/>
            <person name="Jenkins J."/>
            <person name="Grimwood J."/>
            <person name="Schmutz J."/>
            <person name="Mitros T."/>
            <person name="Mozaffari S.V."/>
            <person name="Suzuki Y."/>
            <person name="Haramoto Y."/>
            <person name="Yamamoto T.S."/>
            <person name="Takagi C."/>
            <person name="Heald R."/>
            <person name="Miller K."/>
            <person name="Haudenschild C."/>
            <person name="Kitzman J."/>
            <person name="Nakayama T."/>
            <person name="Izutsu Y."/>
            <person name="Robert J."/>
            <person name="Fortriede J."/>
            <person name="Burns K."/>
            <person name="Lotay V."/>
            <person name="Karimi K."/>
            <person name="Yasuoka Y."/>
            <person name="Dichmann D.S."/>
            <person name="Flajnik M.F."/>
            <person name="Houston D.W."/>
            <person name="Shendure J."/>
            <person name="DuPasquier L."/>
            <person name="Vize P.D."/>
            <person name="Zorn A.M."/>
            <person name="Ito M."/>
            <person name="Marcotte E.M."/>
            <person name="Wallingford J.B."/>
            <person name="Ito Y."/>
            <person name="Asashima M."/>
            <person name="Ueno N."/>
            <person name="Matsuda Y."/>
            <person name="Veenstra G.J."/>
            <person name="Fujiyama A."/>
            <person name="Harland R.M."/>
            <person name="Taira M."/>
            <person name="Rokhsar D.S."/>
        </authorList>
    </citation>
    <scope>NUCLEOTIDE SEQUENCE [LARGE SCALE GENOMIC DNA]</scope>
</reference>
<reference key="2">
    <citation type="journal article" date="2017" name="EMBO J.">
        <title>Multivalent binding of PWWP2A to H2A.Z regulates mitosis and neural crest differentiation.</title>
        <authorList>
            <person name="Puenzeler S."/>
            <person name="Link S."/>
            <person name="Wagner G."/>
            <person name="Keilhauer E.C."/>
            <person name="Kronbeck N."/>
            <person name="Spitzer R.M."/>
            <person name="Leidescher S."/>
            <person name="Markaki Y."/>
            <person name="Mentele E."/>
            <person name="Regnard C."/>
            <person name="Schneider K."/>
            <person name="Takahashi D."/>
            <person name="Kusakabe M."/>
            <person name="Vardabasso C."/>
            <person name="Zink L.M."/>
            <person name="Straub T."/>
            <person name="Bernstein E."/>
            <person name="Harata M."/>
            <person name="Leonhardt H."/>
            <person name="Mann M."/>
            <person name="Rupp R.A."/>
            <person name="Hake S.B."/>
        </authorList>
    </citation>
    <scope>FUNCTION</scope>
    <scope>DISRUPTION PHENOTYPE</scope>
</reference>